<sequence>MVLSSQPPSSRSATGSVLSWPQVLGRLTAGQDLTRGQAAWAMGQVMTGNARPAQIAAFAVAMKMKVPTAAEVSELADVMLSHARKLPTEAICQDIGETVDIAGTGGDGANTVNLSTMAAIVVAAAGVPVVKHGNRASSSLSGGADTLEALGVRIDLGPEQVANSLAEIGIGFCFAPLFQPSYRYASAVRHEIGVPTVFNILGPLTNPAWPRAGLIGCAFGNLAEVMAGVFAARRSSVLVVHGDDGLDELTTTTTSTIWRVQAGTVDKLTFDPVEFGFARAHLDDLLGGDAQTNAAKVRAVLAGAKGPVRDAVVLNAAGAIVAYAGLSSHAEWSPAWDDGLARASAAIDSGAAEQLLARWVRFSQQV</sequence>
<keyword id="KW-0028">Amino-acid biosynthesis</keyword>
<keyword id="KW-0057">Aromatic amino acid biosynthesis</keyword>
<keyword id="KW-0328">Glycosyltransferase</keyword>
<keyword id="KW-0460">Magnesium</keyword>
<keyword id="KW-0479">Metal-binding</keyword>
<keyword id="KW-0808">Transferase</keyword>
<keyword id="KW-0822">Tryptophan biosynthesis</keyword>
<proteinExistence type="inferred from homology"/>
<reference key="1">
    <citation type="journal article" date="2009" name="Nat. Genet.">
        <title>Comparative genomic and phylogeographic analysis of Mycobacterium leprae.</title>
        <authorList>
            <person name="Monot M."/>
            <person name="Honore N."/>
            <person name="Garnier T."/>
            <person name="Zidane N."/>
            <person name="Sherafi D."/>
            <person name="Paniz-Mondolfi A."/>
            <person name="Matsuoka M."/>
            <person name="Taylor G.M."/>
            <person name="Donoghue H.D."/>
            <person name="Bouwman A."/>
            <person name="Mays S."/>
            <person name="Watson C."/>
            <person name="Lockwood D."/>
            <person name="Khamispour A."/>
            <person name="Dowlati Y."/>
            <person name="Jianping S."/>
            <person name="Rea T.H."/>
            <person name="Vera-Cabrera L."/>
            <person name="Stefani M.M."/>
            <person name="Banu S."/>
            <person name="Macdonald M."/>
            <person name="Sapkota B.R."/>
            <person name="Spencer J.S."/>
            <person name="Thomas J."/>
            <person name="Harshman K."/>
            <person name="Singh P."/>
            <person name="Busso P."/>
            <person name="Gattiker A."/>
            <person name="Rougemont J."/>
            <person name="Brennan P.J."/>
            <person name="Cole S.T."/>
        </authorList>
    </citation>
    <scope>NUCLEOTIDE SEQUENCE [LARGE SCALE GENOMIC DNA]</scope>
    <source>
        <strain>Br4923</strain>
    </source>
</reference>
<protein>
    <recommendedName>
        <fullName evidence="1">Anthranilate phosphoribosyltransferase</fullName>
        <ecNumber evidence="1">2.4.2.18</ecNumber>
    </recommendedName>
</protein>
<evidence type="ECO:0000255" key="1">
    <source>
        <dbReference type="HAMAP-Rule" id="MF_00211"/>
    </source>
</evidence>
<accession>B8ZQM2</accession>
<organism>
    <name type="scientific">Mycobacterium leprae (strain Br4923)</name>
    <dbReference type="NCBI Taxonomy" id="561304"/>
    <lineage>
        <taxon>Bacteria</taxon>
        <taxon>Bacillati</taxon>
        <taxon>Actinomycetota</taxon>
        <taxon>Actinomycetes</taxon>
        <taxon>Mycobacteriales</taxon>
        <taxon>Mycobacteriaceae</taxon>
        <taxon>Mycobacterium</taxon>
    </lineage>
</organism>
<comment type="function">
    <text evidence="1">Catalyzes the transfer of the phosphoribosyl group of 5-phosphorylribose-1-pyrophosphate (PRPP) to anthranilate to yield N-(5'-phosphoribosyl)-anthranilate (PRA).</text>
</comment>
<comment type="catalytic activity">
    <reaction evidence="1">
        <text>N-(5-phospho-beta-D-ribosyl)anthranilate + diphosphate = 5-phospho-alpha-D-ribose 1-diphosphate + anthranilate</text>
        <dbReference type="Rhea" id="RHEA:11768"/>
        <dbReference type="ChEBI" id="CHEBI:16567"/>
        <dbReference type="ChEBI" id="CHEBI:18277"/>
        <dbReference type="ChEBI" id="CHEBI:33019"/>
        <dbReference type="ChEBI" id="CHEBI:58017"/>
        <dbReference type="EC" id="2.4.2.18"/>
    </reaction>
</comment>
<comment type="cofactor">
    <cofactor evidence="1">
        <name>Mg(2+)</name>
        <dbReference type="ChEBI" id="CHEBI:18420"/>
    </cofactor>
    <text evidence="1">Binds 2 magnesium ions per monomer.</text>
</comment>
<comment type="pathway">
    <text evidence="1">Amino-acid biosynthesis; L-tryptophan biosynthesis; L-tryptophan from chorismate: step 2/5.</text>
</comment>
<comment type="subunit">
    <text evidence="1">Homodimer.</text>
</comment>
<comment type="similarity">
    <text evidence="1">Belongs to the anthranilate phosphoribosyltransferase family.</text>
</comment>
<dbReference type="EC" id="2.4.2.18" evidence="1"/>
<dbReference type="EMBL" id="FM211192">
    <property type="protein sequence ID" value="CAR70978.1"/>
    <property type="molecule type" value="Genomic_DNA"/>
</dbReference>
<dbReference type="SMR" id="B8ZQM2"/>
<dbReference type="KEGG" id="mlb:MLBr00883"/>
<dbReference type="HOGENOM" id="CLU_034315_4_1_11"/>
<dbReference type="UniPathway" id="UPA00035">
    <property type="reaction ID" value="UER00041"/>
</dbReference>
<dbReference type="Proteomes" id="UP000006900">
    <property type="component" value="Chromosome"/>
</dbReference>
<dbReference type="GO" id="GO:0005829">
    <property type="term" value="C:cytosol"/>
    <property type="evidence" value="ECO:0007669"/>
    <property type="project" value="TreeGrafter"/>
</dbReference>
<dbReference type="GO" id="GO:0004048">
    <property type="term" value="F:anthranilate phosphoribosyltransferase activity"/>
    <property type="evidence" value="ECO:0007669"/>
    <property type="project" value="UniProtKB-UniRule"/>
</dbReference>
<dbReference type="GO" id="GO:0000287">
    <property type="term" value="F:magnesium ion binding"/>
    <property type="evidence" value="ECO:0007669"/>
    <property type="project" value="UniProtKB-UniRule"/>
</dbReference>
<dbReference type="GO" id="GO:0000162">
    <property type="term" value="P:L-tryptophan biosynthetic process"/>
    <property type="evidence" value="ECO:0007669"/>
    <property type="project" value="UniProtKB-UniRule"/>
</dbReference>
<dbReference type="FunFam" id="1.20.970.10:FF:000006">
    <property type="entry name" value="Anthranilate phosphoribosyltransferase"/>
    <property type="match status" value="1"/>
</dbReference>
<dbReference type="FunFam" id="3.40.1030.10:FF:000002">
    <property type="entry name" value="Anthranilate phosphoribosyltransferase"/>
    <property type="match status" value="1"/>
</dbReference>
<dbReference type="Gene3D" id="3.40.1030.10">
    <property type="entry name" value="Nucleoside phosphorylase/phosphoribosyltransferase catalytic domain"/>
    <property type="match status" value="1"/>
</dbReference>
<dbReference type="Gene3D" id="1.20.970.10">
    <property type="entry name" value="Transferase, Pyrimidine Nucleoside Phosphorylase, Chain C"/>
    <property type="match status" value="1"/>
</dbReference>
<dbReference type="HAMAP" id="MF_00211">
    <property type="entry name" value="TrpD"/>
    <property type="match status" value="1"/>
</dbReference>
<dbReference type="InterPro" id="IPR005940">
    <property type="entry name" value="Anthranilate_Pribosyl_Tfrase"/>
</dbReference>
<dbReference type="InterPro" id="IPR000312">
    <property type="entry name" value="Glycosyl_Trfase_fam3"/>
</dbReference>
<dbReference type="InterPro" id="IPR017459">
    <property type="entry name" value="Glycosyl_Trfase_fam3_N_dom"/>
</dbReference>
<dbReference type="InterPro" id="IPR036320">
    <property type="entry name" value="Glycosyl_Trfase_fam3_N_dom_sf"/>
</dbReference>
<dbReference type="InterPro" id="IPR035902">
    <property type="entry name" value="Nuc_phospho_transferase"/>
</dbReference>
<dbReference type="NCBIfam" id="TIGR01245">
    <property type="entry name" value="trpD"/>
    <property type="match status" value="1"/>
</dbReference>
<dbReference type="PANTHER" id="PTHR43285">
    <property type="entry name" value="ANTHRANILATE PHOSPHORIBOSYLTRANSFERASE"/>
    <property type="match status" value="1"/>
</dbReference>
<dbReference type="PANTHER" id="PTHR43285:SF2">
    <property type="entry name" value="ANTHRANILATE PHOSPHORIBOSYLTRANSFERASE"/>
    <property type="match status" value="1"/>
</dbReference>
<dbReference type="Pfam" id="PF02885">
    <property type="entry name" value="Glycos_trans_3N"/>
    <property type="match status" value="1"/>
</dbReference>
<dbReference type="Pfam" id="PF00591">
    <property type="entry name" value="Glycos_transf_3"/>
    <property type="match status" value="1"/>
</dbReference>
<dbReference type="SUPFAM" id="SSF52418">
    <property type="entry name" value="Nucleoside phosphorylase/phosphoribosyltransferase catalytic domain"/>
    <property type="match status" value="1"/>
</dbReference>
<dbReference type="SUPFAM" id="SSF47648">
    <property type="entry name" value="Nucleoside phosphorylase/phosphoribosyltransferase N-terminal domain"/>
    <property type="match status" value="1"/>
</dbReference>
<name>TRPD_MYCLB</name>
<gene>
    <name evidence="1" type="primary">trpD</name>
    <name type="ordered locus">MLBr00883</name>
</gene>
<feature type="chain" id="PRO_1000198833" description="Anthranilate phosphoribosyltransferase">
    <location>
        <begin position="1"/>
        <end position="366"/>
    </location>
</feature>
<feature type="binding site" evidence="1">
    <location>
        <position position="103"/>
    </location>
    <ligand>
        <name>5-phospho-alpha-D-ribose 1-diphosphate</name>
        <dbReference type="ChEBI" id="CHEBI:58017"/>
    </ligand>
</feature>
<feature type="binding site" evidence="1">
    <location>
        <position position="103"/>
    </location>
    <ligand>
        <name>anthranilate</name>
        <dbReference type="ChEBI" id="CHEBI:16567"/>
        <label>1</label>
    </ligand>
</feature>
<feature type="binding site" evidence="1">
    <location>
        <begin position="106"/>
        <end position="107"/>
    </location>
    <ligand>
        <name>5-phospho-alpha-D-ribose 1-diphosphate</name>
        <dbReference type="ChEBI" id="CHEBI:58017"/>
    </ligand>
</feature>
<feature type="binding site" evidence="1">
    <location>
        <position position="111"/>
    </location>
    <ligand>
        <name>5-phospho-alpha-D-ribose 1-diphosphate</name>
        <dbReference type="ChEBI" id="CHEBI:58017"/>
    </ligand>
</feature>
<feature type="binding site" evidence="1">
    <location>
        <begin position="113"/>
        <end position="116"/>
    </location>
    <ligand>
        <name>5-phospho-alpha-D-ribose 1-diphosphate</name>
        <dbReference type="ChEBI" id="CHEBI:58017"/>
    </ligand>
</feature>
<feature type="binding site" evidence="1">
    <location>
        <position position="115"/>
    </location>
    <ligand>
        <name>Mg(2+)</name>
        <dbReference type="ChEBI" id="CHEBI:18420"/>
        <label>1</label>
    </ligand>
</feature>
<feature type="binding site" evidence="1">
    <location>
        <begin position="131"/>
        <end position="139"/>
    </location>
    <ligand>
        <name>5-phospho-alpha-D-ribose 1-diphosphate</name>
        <dbReference type="ChEBI" id="CHEBI:58017"/>
    </ligand>
</feature>
<feature type="binding site" evidence="1">
    <location>
        <position position="134"/>
    </location>
    <ligand>
        <name>anthranilate</name>
        <dbReference type="ChEBI" id="CHEBI:16567"/>
        <label>1</label>
    </ligand>
</feature>
<feature type="binding site" evidence="1">
    <location>
        <position position="143"/>
    </location>
    <ligand>
        <name>5-phospho-alpha-D-ribose 1-diphosphate</name>
        <dbReference type="ChEBI" id="CHEBI:58017"/>
    </ligand>
</feature>
<feature type="binding site" evidence="1">
    <location>
        <position position="189"/>
    </location>
    <ligand>
        <name>anthranilate</name>
        <dbReference type="ChEBI" id="CHEBI:16567"/>
        <label>2</label>
    </ligand>
</feature>
<feature type="binding site" evidence="1">
    <location>
        <position position="247"/>
    </location>
    <ligand>
        <name>Mg(2+)</name>
        <dbReference type="ChEBI" id="CHEBI:18420"/>
        <label>2</label>
    </ligand>
</feature>
<feature type="binding site" evidence="1">
    <location>
        <position position="248"/>
    </location>
    <ligand>
        <name>Mg(2+)</name>
        <dbReference type="ChEBI" id="CHEBI:18420"/>
        <label>1</label>
    </ligand>
</feature>
<feature type="binding site" evidence="1">
    <location>
        <position position="248"/>
    </location>
    <ligand>
        <name>Mg(2+)</name>
        <dbReference type="ChEBI" id="CHEBI:18420"/>
        <label>2</label>
    </ligand>
</feature>